<reference key="1">
    <citation type="journal article" date="2005" name="Science">
        <title>The transcriptional landscape of the mammalian genome.</title>
        <authorList>
            <person name="Carninci P."/>
            <person name="Kasukawa T."/>
            <person name="Katayama S."/>
            <person name="Gough J."/>
            <person name="Frith M.C."/>
            <person name="Maeda N."/>
            <person name="Oyama R."/>
            <person name="Ravasi T."/>
            <person name="Lenhard B."/>
            <person name="Wells C."/>
            <person name="Kodzius R."/>
            <person name="Shimokawa K."/>
            <person name="Bajic V.B."/>
            <person name="Brenner S.E."/>
            <person name="Batalov S."/>
            <person name="Forrest A.R."/>
            <person name="Zavolan M."/>
            <person name="Davis M.J."/>
            <person name="Wilming L.G."/>
            <person name="Aidinis V."/>
            <person name="Allen J.E."/>
            <person name="Ambesi-Impiombato A."/>
            <person name="Apweiler R."/>
            <person name="Aturaliya R.N."/>
            <person name="Bailey T.L."/>
            <person name="Bansal M."/>
            <person name="Baxter L."/>
            <person name="Beisel K.W."/>
            <person name="Bersano T."/>
            <person name="Bono H."/>
            <person name="Chalk A.M."/>
            <person name="Chiu K.P."/>
            <person name="Choudhary V."/>
            <person name="Christoffels A."/>
            <person name="Clutterbuck D.R."/>
            <person name="Crowe M.L."/>
            <person name="Dalla E."/>
            <person name="Dalrymple B.P."/>
            <person name="de Bono B."/>
            <person name="Della Gatta G."/>
            <person name="di Bernardo D."/>
            <person name="Down T."/>
            <person name="Engstrom P."/>
            <person name="Fagiolini M."/>
            <person name="Faulkner G."/>
            <person name="Fletcher C.F."/>
            <person name="Fukushima T."/>
            <person name="Furuno M."/>
            <person name="Futaki S."/>
            <person name="Gariboldi M."/>
            <person name="Georgii-Hemming P."/>
            <person name="Gingeras T.R."/>
            <person name="Gojobori T."/>
            <person name="Green R.E."/>
            <person name="Gustincich S."/>
            <person name="Harbers M."/>
            <person name="Hayashi Y."/>
            <person name="Hensch T.K."/>
            <person name="Hirokawa N."/>
            <person name="Hill D."/>
            <person name="Huminiecki L."/>
            <person name="Iacono M."/>
            <person name="Ikeo K."/>
            <person name="Iwama A."/>
            <person name="Ishikawa T."/>
            <person name="Jakt M."/>
            <person name="Kanapin A."/>
            <person name="Katoh M."/>
            <person name="Kawasawa Y."/>
            <person name="Kelso J."/>
            <person name="Kitamura H."/>
            <person name="Kitano H."/>
            <person name="Kollias G."/>
            <person name="Krishnan S.P."/>
            <person name="Kruger A."/>
            <person name="Kummerfeld S.K."/>
            <person name="Kurochkin I.V."/>
            <person name="Lareau L.F."/>
            <person name="Lazarevic D."/>
            <person name="Lipovich L."/>
            <person name="Liu J."/>
            <person name="Liuni S."/>
            <person name="McWilliam S."/>
            <person name="Madan Babu M."/>
            <person name="Madera M."/>
            <person name="Marchionni L."/>
            <person name="Matsuda H."/>
            <person name="Matsuzawa S."/>
            <person name="Miki H."/>
            <person name="Mignone F."/>
            <person name="Miyake S."/>
            <person name="Morris K."/>
            <person name="Mottagui-Tabar S."/>
            <person name="Mulder N."/>
            <person name="Nakano N."/>
            <person name="Nakauchi H."/>
            <person name="Ng P."/>
            <person name="Nilsson R."/>
            <person name="Nishiguchi S."/>
            <person name="Nishikawa S."/>
            <person name="Nori F."/>
            <person name="Ohara O."/>
            <person name="Okazaki Y."/>
            <person name="Orlando V."/>
            <person name="Pang K.C."/>
            <person name="Pavan W.J."/>
            <person name="Pavesi G."/>
            <person name="Pesole G."/>
            <person name="Petrovsky N."/>
            <person name="Piazza S."/>
            <person name="Reed J."/>
            <person name="Reid J.F."/>
            <person name="Ring B.Z."/>
            <person name="Ringwald M."/>
            <person name="Rost B."/>
            <person name="Ruan Y."/>
            <person name="Salzberg S.L."/>
            <person name="Sandelin A."/>
            <person name="Schneider C."/>
            <person name="Schoenbach C."/>
            <person name="Sekiguchi K."/>
            <person name="Semple C.A."/>
            <person name="Seno S."/>
            <person name="Sessa L."/>
            <person name="Sheng Y."/>
            <person name="Shibata Y."/>
            <person name="Shimada H."/>
            <person name="Shimada K."/>
            <person name="Silva D."/>
            <person name="Sinclair B."/>
            <person name="Sperling S."/>
            <person name="Stupka E."/>
            <person name="Sugiura K."/>
            <person name="Sultana R."/>
            <person name="Takenaka Y."/>
            <person name="Taki K."/>
            <person name="Tammoja K."/>
            <person name="Tan S.L."/>
            <person name="Tang S."/>
            <person name="Taylor M.S."/>
            <person name="Tegner J."/>
            <person name="Teichmann S.A."/>
            <person name="Ueda H.R."/>
            <person name="van Nimwegen E."/>
            <person name="Verardo R."/>
            <person name="Wei C.L."/>
            <person name="Yagi K."/>
            <person name="Yamanishi H."/>
            <person name="Zabarovsky E."/>
            <person name="Zhu S."/>
            <person name="Zimmer A."/>
            <person name="Hide W."/>
            <person name="Bult C."/>
            <person name="Grimmond S.M."/>
            <person name="Teasdale R.D."/>
            <person name="Liu E.T."/>
            <person name="Brusic V."/>
            <person name="Quackenbush J."/>
            <person name="Wahlestedt C."/>
            <person name="Mattick J.S."/>
            <person name="Hume D.A."/>
            <person name="Kai C."/>
            <person name="Sasaki D."/>
            <person name="Tomaru Y."/>
            <person name="Fukuda S."/>
            <person name="Kanamori-Katayama M."/>
            <person name="Suzuki M."/>
            <person name="Aoki J."/>
            <person name="Arakawa T."/>
            <person name="Iida J."/>
            <person name="Imamura K."/>
            <person name="Itoh M."/>
            <person name="Kato T."/>
            <person name="Kawaji H."/>
            <person name="Kawagashira N."/>
            <person name="Kawashima T."/>
            <person name="Kojima M."/>
            <person name="Kondo S."/>
            <person name="Konno H."/>
            <person name="Nakano K."/>
            <person name="Ninomiya N."/>
            <person name="Nishio T."/>
            <person name="Okada M."/>
            <person name="Plessy C."/>
            <person name="Shibata K."/>
            <person name="Shiraki T."/>
            <person name="Suzuki S."/>
            <person name="Tagami M."/>
            <person name="Waki K."/>
            <person name="Watahiki A."/>
            <person name="Okamura-Oho Y."/>
            <person name="Suzuki H."/>
            <person name="Kawai J."/>
            <person name="Hayashizaki Y."/>
        </authorList>
    </citation>
    <scope>NUCLEOTIDE SEQUENCE [LARGE SCALE MRNA]</scope>
    <source>
        <strain>C57BL/6J</strain>
        <tissue>Testis</tissue>
    </source>
</reference>
<reference key="2">
    <citation type="journal article" date="2004" name="Genome Res.">
        <title>The status, quality, and expansion of the NIH full-length cDNA project: the Mammalian Gene Collection (MGC).</title>
        <authorList>
            <consortium name="The MGC Project Team"/>
        </authorList>
    </citation>
    <scope>NUCLEOTIDE SEQUENCE [LARGE SCALE MRNA]</scope>
</reference>
<reference key="3">
    <citation type="journal article" date="2007" name="Proc. Natl. Acad. Sci. U.S.A.">
        <title>Large-scale phosphorylation analysis of mouse liver.</title>
        <authorList>
            <person name="Villen J."/>
            <person name="Beausoleil S.A."/>
            <person name="Gerber S.A."/>
            <person name="Gygi S.P."/>
        </authorList>
    </citation>
    <scope>IDENTIFICATION BY MASS SPECTROMETRY [LARGE SCALE ANALYSIS]</scope>
    <source>
        <tissue>Liver</tissue>
    </source>
</reference>
<reference key="4">
    <citation type="journal article" date="2010" name="Cell">
        <title>A tissue-specific atlas of mouse protein phosphorylation and expression.</title>
        <authorList>
            <person name="Huttlin E.L."/>
            <person name="Jedrychowski M.P."/>
            <person name="Elias J.E."/>
            <person name="Goswami T."/>
            <person name="Rad R."/>
            <person name="Beausoleil S.A."/>
            <person name="Villen J."/>
            <person name="Haas W."/>
            <person name="Sowa M.E."/>
            <person name="Gygi S.P."/>
        </authorList>
    </citation>
    <scope>PHOSPHORYLATION [LARGE SCALE ANALYSIS] AT SER-227</scope>
    <scope>IDENTIFICATION BY MASS SPECTROMETRY [LARGE SCALE ANALYSIS]</scope>
    <source>
        <tissue>Brain</tissue>
        <tissue>Heart</tissue>
        <tissue>Kidney</tissue>
        <tissue>Liver</tissue>
        <tissue>Lung</tissue>
        <tissue>Pancreas</tissue>
        <tissue>Spleen</tissue>
        <tissue>Testis</tissue>
    </source>
</reference>
<comment type="function">
    <text evidence="1">Seems to play a negative regulatory role in 5-phosphoribose 1-diphosphate synthesis.</text>
</comment>
<comment type="subunit">
    <text evidence="1">Binds to PRPS1 and PRPS2.</text>
</comment>
<comment type="similarity">
    <text evidence="3">Belongs to the ribose-phosphate pyrophosphokinase family.</text>
</comment>
<dbReference type="EMBL" id="AK076811">
    <property type="protein sequence ID" value="BAC36491.1"/>
    <property type="molecule type" value="mRNA"/>
</dbReference>
<dbReference type="EMBL" id="BC023178">
    <property type="protein sequence ID" value="AAH23178.1"/>
    <property type="molecule type" value="mRNA"/>
</dbReference>
<dbReference type="CCDS" id="CCDS24819.1"/>
<dbReference type="RefSeq" id="NP_001157714.1">
    <property type="nucleotide sequence ID" value="NM_001164242.1"/>
</dbReference>
<dbReference type="RefSeq" id="NP_001351015.1">
    <property type="nucleotide sequence ID" value="NM_001364086.1"/>
</dbReference>
<dbReference type="RefSeq" id="NP_001351016.1">
    <property type="nucleotide sequence ID" value="NM_001364087.1"/>
</dbReference>
<dbReference type="RefSeq" id="NP_659055.1">
    <property type="nucleotide sequence ID" value="NM_144806.2"/>
</dbReference>
<dbReference type="RefSeq" id="XP_006532824.1">
    <property type="nucleotide sequence ID" value="XM_006532761.3"/>
</dbReference>
<dbReference type="RefSeq" id="XP_030101615.1">
    <property type="nucleotide sequence ID" value="XM_030245755.2"/>
</dbReference>
<dbReference type="SMR" id="Q8R574"/>
<dbReference type="BioGRID" id="229344">
    <property type="interactions" value="2"/>
</dbReference>
<dbReference type="FunCoup" id="Q8R574">
    <property type="interactions" value="1380"/>
</dbReference>
<dbReference type="IntAct" id="Q8R574">
    <property type="interactions" value="2"/>
</dbReference>
<dbReference type="MINT" id="Q8R574"/>
<dbReference type="STRING" id="10090.ENSMUSP00000004955"/>
<dbReference type="iPTMnet" id="Q8R574"/>
<dbReference type="PhosphoSitePlus" id="Q8R574"/>
<dbReference type="SwissPalm" id="Q8R574"/>
<dbReference type="jPOST" id="Q8R574"/>
<dbReference type="PaxDb" id="10090-ENSMUSP00000004955"/>
<dbReference type="ProteomicsDB" id="264794"/>
<dbReference type="Pumba" id="Q8R574"/>
<dbReference type="Antibodypedia" id="13570">
    <property type="antibodies" value="144 antibodies from 24 providers"/>
</dbReference>
<dbReference type="DNASU" id="212627"/>
<dbReference type="Ensembl" id="ENSMUST00000004955.14">
    <property type="protein sequence ID" value="ENSMUSP00000004955.8"/>
    <property type="gene ID" value="ENSMUSG00000020528.15"/>
</dbReference>
<dbReference type="Ensembl" id="ENSMUST00000168115.8">
    <property type="protein sequence ID" value="ENSMUSP00000126274.2"/>
    <property type="gene ID" value="ENSMUSG00000020528.15"/>
</dbReference>
<dbReference type="GeneID" id="212627"/>
<dbReference type="KEGG" id="mmu:212627"/>
<dbReference type="UCSC" id="uc007jie.2">
    <property type="organism name" value="mouse"/>
</dbReference>
<dbReference type="AGR" id="MGI:2384838"/>
<dbReference type="CTD" id="5636"/>
<dbReference type="MGI" id="MGI:2384838">
    <property type="gene designation" value="Prpsap2"/>
</dbReference>
<dbReference type="VEuPathDB" id="HostDB:ENSMUSG00000020528"/>
<dbReference type="eggNOG" id="KOG1503">
    <property type="taxonomic scope" value="Eukaryota"/>
</dbReference>
<dbReference type="GeneTree" id="ENSGT00950000182803"/>
<dbReference type="HOGENOM" id="CLU_033546_0_0_1"/>
<dbReference type="InParanoid" id="Q8R574"/>
<dbReference type="OMA" id="HYAYARS"/>
<dbReference type="OrthoDB" id="413572at2759"/>
<dbReference type="PhylomeDB" id="Q8R574"/>
<dbReference type="TreeFam" id="TF106367"/>
<dbReference type="BioGRID-ORCS" id="212627">
    <property type="hits" value="3 hits in 77 CRISPR screens"/>
</dbReference>
<dbReference type="ChiTaRS" id="Prpsap2">
    <property type="organism name" value="mouse"/>
</dbReference>
<dbReference type="PRO" id="PR:Q8R574"/>
<dbReference type="Proteomes" id="UP000000589">
    <property type="component" value="Chromosome 11"/>
</dbReference>
<dbReference type="RNAct" id="Q8R574">
    <property type="molecule type" value="protein"/>
</dbReference>
<dbReference type="Bgee" id="ENSMUSG00000020528">
    <property type="expression patterns" value="Expressed in secondary oocyte and 75 other cell types or tissues"/>
</dbReference>
<dbReference type="ExpressionAtlas" id="Q8R574">
    <property type="expression patterns" value="baseline and differential"/>
</dbReference>
<dbReference type="GO" id="GO:0002189">
    <property type="term" value="C:ribose phosphate diphosphokinase complex"/>
    <property type="evidence" value="ECO:0007669"/>
    <property type="project" value="Ensembl"/>
</dbReference>
<dbReference type="GO" id="GO:0042802">
    <property type="term" value="F:identical protein binding"/>
    <property type="evidence" value="ECO:0007669"/>
    <property type="project" value="Ensembl"/>
</dbReference>
<dbReference type="GO" id="GO:0000287">
    <property type="term" value="F:magnesium ion binding"/>
    <property type="evidence" value="ECO:0007669"/>
    <property type="project" value="InterPro"/>
</dbReference>
<dbReference type="GO" id="GO:0060348">
    <property type="term" value="P:bone development"/>
    <property type="evidence" value="ECO:0000315"/>
    <property type="project" value="MGI"/>
</dbReference>
<dbReference type="GO" id="GO:0009165">
    <property type="term" value="P:nucleotide biosynthetic process"/>
    <property type="evidence" value="ECO:0007669"/>
    <property type="project" value="UniProtKB-KW"/>
</dbReference>
<dbReference type="CDD" id="cd06223">
    <property type="entry name" value="PRTases_typeI"/>
    <property type="match status" value="1"/>
</dbReference>
<dbReference type="FunFam" id="3.40.50.2020:FF:000012">
    <property type="entry name" value="Phosphoribosyl pyrophosphate synthase-associated protein 2 isoform 1"/>
    <property type="match status" value="1"/>
</dbReference>
<dbReference type="FunFam" id="3.40.50.2020:FF:000014">
    <property type="entry name" value="Ribose-phosphate pyrophosphokinase 1"/>
    <property type="match status" value="1"/>
</dbReference>
<dbReference type="Gene3D" id="3.40.50.2020">
    <property type="match status" value="2"/>
</dbReference>
<dbReference type="InterPro" id="IPR029099">
    <property type="entry name" value="Pribosyltran_N"/>
</dbReference>
<dbReference type="InterPro" id="IPR000836">
    <property type="entry name" value="PRibTrfase_dom"/>
</dbReference>
<dbReference type="InterPro" id="IPR029057">
    <property type="entry name" value="PRTase-like"/>
</dbReference>
<dbReference type="InterPro" id="IPR005946">
    <property type="entry name" value="Rib-P_diPkinase"/>
</dbReference>
<dbReference type="NCBIfam" id="TIGR01251">
    <property type="entry name" value="ribP_PPkin"/>
    <property type="match status" value="1"/>
</dbReference>
<dbReference type="PANTHER" id="PTHR10210:SF29">
    <property type="entry name" value="PHOSPHORIBOSYL PYROPHOSPHATE SYNTHASE-ASSOCIATED PROTEIN 2"/>
    <property type="match status" value="1"/>
</dbReference>
<dbReference type="PANTHER" id="PTHR10210">
    <property type="entry name" value="RIBOSE-PHOSPHATE DIPHOSPHOKINASE FAMILY MEMBER"/>
    <property type="match status" value="1"/>
</dbReference>
<dbReference type="Pfam" id="PF14572">
    <property type="entry name" value="Pribosyl_synth"/>
    <property type="match status" value="1"/>
</dbReference>
<dbReference type="Pfam" id="PF13793">
    <property type="entry name" value="Pribosyltran_N"/>
    <property type="match status" value="1"/>
</dbReference>
<dbReference type="SMART" id="SM01400">
    <property type="entry name" value="Pribosyltran_N"/>
    <property type="match status" value="1"/>
</dbReference>
<dbReference type="SUPFAM" id="SSF53271">
    <property type="entry name" value="PRTase-like"/>
    <property type="match status" value="2"/>
</dbReference>
<name>KPRB_MOUSE</name>
<protein>
    <recommendedName>
        <fullName>Phosphoribosyl pyrophosphate synthase-associated protein 2</fullName>
        <shortName>PRPP synthase-associated protein 2</shortName>
    </recommendedName>
    <alternativeName>
        <fullName>41 kDa phosphoribosypyrophosphate synthetase-associated protein</fullName>
        <shortName>PAP41</shortName>
    </alternativeName>
</protein>
<evidence type="ECO:0000250" key="1"/>
<evidence type="ECO:0000250" key="2">
    <source>
        <dbReference type="UniProtKB" id="O60256"/>
    </source>
</evidence>
<evidence type="ECO:0000305" key="3"/>
<evidence type="ECO:0007744" key="4">
    <source>
    </source>
</evidence>
<sequence>MFCVAPPELETKMNITKGGLVLFSANSNSSCMELSKKIAERLGVEMGKVQVYQEPNRETRVQIQESVRGKDVFIIQTISKDVNTTIMELLIMVYACKTSCAKSIIGVIPYFPYSKQCKMRKRGSIVSKLLASMMCKAGLTHLITMDLHQKEIQGFFNIPVDNLRASPFLLQYIQEEIPDYRNAVIVAKSPASAKRAQSFAERLRLGIAVIHGEAQDAESDLVDGRHSPPMVRSVAAIHPSLEIPMLIPKEKPPITVVGDVGGRIAIIVDDIIDDVDSFLAAAETLKERGAYKIFVMATHGLLSSDAPRLIEESAIDEVVVTNTIPHEIQKLQCPKIKTVDISMILSEAIRRIHNGESMSYLFRNIGLDD</sequence>
<organism>
    <name type="scientific">Mus musculus</name>
    <name type="common">Mouse</name>
    <dbReference type="NCBI Taxonomy" id="10090"/>
    <lineage>
        <taxon>Eukaryota</taxon>
        <taxon>Metazoa</taxon>
        <taxon>Chordata</taxon>
        <taxon>Craniata</taxon>
        <taxon>Vertebrata</taxon>
        <taxon>Euteleostomi</taxon>
        <taxon>Mammalia</taxon>
        <taxon>Eutheria</taxon>
        <taxon>Euarchontoglires</taxon>
        <taxon>Glires</taxon>
        <taxon>Rodentia</taxon>
        <taxon>Myomorpha</taxon>
        <taxon>Muroidea</taxon>
        <taxon>Muridae</taxon>
        <taxon>Murinae</taxon>
        <taxon>Mus</taxon>
        <taxon>Mus</taxon>
    </lineage>
</organism>
<gene>
    <name type="primary">Prpsap2</name>
</gene>
<feature type="chain" id="PRO_0000141083" description="Phosphoribosyl pyrophosphate synthase-associated protein 2">
    <location>
        <begin position="1"/>
        <end position="369"/>
    </location>
</feature>
<feature type="modified residue" description="N-acetylmethionine" evidence="2">
    <location>
        <position position="1"/>
    </location>
</feature>
<feature type="modified residue" description="Phosphoserine" evidence="2">
    <location>
        <position position="219"/>
    </location>
</feature>
<feature type="modified residue" description="Phosphoserine" evidence="4">
    <location>
        <position position="227"/>
    </location>
</feature>
<feature type="modified residue" description="Phosphoserine" evidence="2">
    <location>
        <position position="233"/>
    </location>
</feature>
<keyword id="KW-0007">Acetylation</keyword>
<keyword id="KW-0545">Nucleotide biosynthesis</keyword>
<keyword id="KW-0597">Phosphoprotein</keyword>
<keyword id="KW-1185">Reference proteome</keyword>
<accession>Q8R574</accession>
<proteinExistence type="evidence at protein level"/>